<accession>B7UJP5</accession>
<reference key="1">
    <citation type="journal article" date="2009" name="J. Bacteriol.">
        <title>Complete genome sequence and comparative genome analysis of enteropathogenic Escherichia coli O127:H6 strain E2348/69.</title>
        <authorList>
            <person name="Iguchi A."/>
            <person name="Thomson N.R."/>
            <person name="Ogura Y."/>
            <person name="Saunders D."/>
            <person name="Ooka T."/>
            <person name="Henderson I.R."/>
            <person name="Harris D."/>
            <person name="Asadulghani M."/>
            <person name="Kurokawa K."/>
            <person name="Dean P."/>
            <person name="Kenny B."/>
            <person name="Quail M.A."/>
            <person name="Thurston S."/>
            <person name="Dougan G."/>
            <person name="Hayashi T."/>
            <person name="Parkhill J."/>
            <person name="Frankel G."/>
        </authorList>
    </citation>
    <scope>NUCLEOTIDE SEQUENCE [LARGE SCALE GENOMIC DNA]</scope>
    <source>
        <strain>E2348/69 / EPEC</strain>
    </source>
</reference>
<feature type="chain" id="PRO_1000200251" description="Exodeoxyribonuclease 7 small subunit">
    <location>
        <begin position="1"/>
        <end position="80"/>
    </location>
</feature>
<evidence type="ECO:0000255" key="1">
    <source>
        <dbReference type="HAMAP-Rule" id="MF_00337"/>
    </source>
</evidence>
<keyword id="KW-0963">Cytoplasm</keyword>
<keyword id="KW-0269">Exonuclease</keyword>
<keyword id="KW-0378">Hydrolase</keyword>
<keyword id="KW-0540">Nuclease</keyword>
<keyword id="KW-1185">Reference proteome</keyword>
<gene>
    <name evidence="1" type="primary">xseB</name>
    <name type="ordered locus">E2348C_0357</name>
</gene>
<dbReference type="EC" id="3.1.11.6" evidence="1"/>
<dbReference type="EMBL" id="FM180568">
    <property type="protein sequence ID" value="CAS07905.1"/>
    <property type="molecule type" value="Genomic_DNA"/>
</dbReference>
<dbReference type="RefSeq" id="WP_001124935.1">
    <property type="nucleotide sequence ID" value="NC_011601.1"/>
</dbReference>
<dbReference type="SMR" id="B7UJP5"/>
<dbReference type="GeneID" id="75202844"/>
<dbReference type="KEGG" id="ecg:E2348C_0357"/>
<dbReference type="HOGENOM" id="CLU_145918_3_3_6"/>
<dbReference type="Proteomes" id="UP000008205">
    <property type="component" value="Chromosome"/>
</dbReference>
<dbReference type="GO" id="GO:0005829">
    <property type="term" value="C:cytosol"/>
    <property type="evidence" value="ECO:0007669"/>
    <property type="project" value="TreeGrafter"/>
</dbReference>
<dbReference type="GO" id="GO:0009318">
    <property type="term" value="C:exodeoxyribonuclease VII complex"/>
    <property type="evidence" value="ECO:0007669"/>
    <property type="project" value="InterPro"/>
</dbReference>
<dbReference type="GO" id="GO:0008855">
    <property type="term" value="F:exodeoxyribonuclease VII activity"/>
    <property type="evidence" value="ECO:0007669"/>
    <property type="project" value="UniProtKB-UniRule"/>
</dbReference>
<dbReference type="GO" id="GO:0006308">
    <property type="term" value="P:DNA catabolic process"/>
    <property type="evidence" value="ECO:0007669"/>
    <property type="project" value="UniProtKB-UniRule"/>
</dbReference>
<dbReference type="FunFam" id="1.10.287.1040:FF:000001">
    <property type="entry name" value="Exodeoxyribonuclease 7 small subunit"/>
    <property type="match status" value="1"/>
</dbReference>
<dbReference type="Gene3D" id="1.10.287.1040">
    <property type="entry name" value="Exonuclease VII, small subunit"/>
    <property type="match status" value="1"/>
</dbReference>
<dbReference type="HAMAP" id="MF_00337">
    <property type="entry name" value="Exonuc_7_S"/>
    <property type="match status" value="1"/>
</dbReference>
<dbReference type="InterPro" id="IPR003761">
    <property type="entry name" value="Exonuc_VII_S"/>
</dbReference>
<dbReference type="InterPro" id="IPR037004">
    <property type="entry name" value="Exonuc_VII_ssu_sf"/>
</dbReference>
<dbReference type="NCBIfam" id="NF002137">
    <property type="entry name" value="PRK00977.1-1"/>
    <property type="match status" value="1"/>
</dbReference>
<dbReference type="NCBIfam" id="NF002140">
    <property type="entry name" value="PRK00977.1-4"/>
    <property type="match status" value="1"/>
</dbReference>
<dbReference type="NCBIfam" id="TIGR01280">
    <property type="entry name" value="xseB"/>
    <property type="match status" value="1"/>
</dbReference>
<dbReference type="PANTHER" id="PTHR34137">
    <property type="entry name" value="EXODEOXYRIBONUCLEASE 7 SMALL SUBUNIT"/>
    <property type="match status" value="1"/>
</dbReference>
<dbReference type="PANTHER" id="PTHR34137:SF1">
    <property type="entry name" value="EXODEOXYRIBONUCLEASE 7 SMALL SUBUNIT"/>
    <property type="match status" value="1"/>
</dbReference>
<dbReference type="Pfam" id="PF02609">
    <property type="entry name" value="Exonuc_VII_S"/>
    <property type="match status" value="1"/>
</dbReference>
<dbReference type="PIRSF" id="PIRSF006488">
    <property type="entry name" value="Exonuc_VII_S"/>
    <property type="match status" value="1"/>
</dbReference>
<dbReference type="SUPFAM" id="SSF116842">
    <property type="entry name" value="XseB-like"/>
    <property type="match status" value="1"/>
</dbReference>
<sequence>MPKKNEAPASFEKALSELEQIVTRLESGDLPLEEALNEFERGVQLARQGQAKLQQAEQRVQILLSDNEDASLTPFTPDNE</sequence>
<name>EX7S_ECO27</name>
<organism>
    <name type="scientific">Escherichia coli O127:H6 (strain E2348/69 / EPEC)</name>
    <dbReference type="NCBI Taxonomy" id="574521"/>
    <lineage>
        <taxon>Bacteria</taxon>
        <taxon>Pseudomonadati</taxon>
        <taxon>Pseudomonadota</taxon>
        <taxon>Gammaproteobacteria</taxon>
        <taxon>Enterobacterales</taxon>
        <taxon>Enterobacteriaceae</taxon>
        <taxon>Escherichia</taxon>
    </lineage>
</organism>
<protein>
    <recommendedName>
        <fullName evidence="1">Exodeoxyribonuclease 7 small subunit</fullName>
        <ecNumber evidence="1">3.1.11.6</ecNumber>
    </recommendedName>
    <alternativeName>
        <fullName evidence="1">Exodeoxyribonuclease VII small subunit</fullName>
        <shortName evidence="1">Exonuclease VII small subunit</shortName>
    </alternativeName>
</protein>
<proteinExistence type="inferred from homology"/>
<comment type="function">
    <text evidence="1">Bidirectionally degrades single-stranded DNA into large acid-insoluble oligonucleotides, which are then degraded further into small acid-soluble oligonucleotides.</text>
</comment>
<comment type="catalytic activity">
    <reaction evidence="1">
        <text>Exonucleolytic cleavage in either 5'- to 3'- or 3'- to 5'-direction to yield nucleoside 5'-phosphates.</text>
        <dbReference type="EC" id="3.1.11.6"/>
    </reaction>
</comment>
<comment type="subunit">
    <text evidence="1">Heterooligomer composed of large and small subunits.</text>
</comment>
<comment type="subcellular location">
    <subcellularLocation>
        <location evidence="1">Cytoplasm</location>
    </subcellularLocation>
</comment>
<comment type="similarity">
    <text evidence="1">Belongs to the XseB family.</text>
</comment>